<proteinExistence type="evidence at transcript level"/>
<feature type="chain" id="PRO_0000072655" description="Lanosterol synthase">
    <location>
        <begin position="1"/>
        <end position="719"/>
    </location>
</feature>
<feature type="repeat" description="PFTB 1">
    <location>
        <begin position="118"/>
        <end position="160"/>
    </location>
</feature>
<feature type="repeat" description="PFTB 2">
    <location>
        <begin position="478"/>
        <end position="523"/>
    </location>
</feature>
<feature type="repeat" description="PFTB 3">
    <location>
        <begin position="555"/>
        <end position="595"/>
    </location>
</feature>
<feature type="repeat" description="PFTB 4">
    <location>
        <begin position="604"/>
        <end position="645"/>
    </location>
</feature>
<feature type="active site" description="Proton donor" evidence="1">
    <location>
        <position position="451"/>
    </location>
</feature>
<protein>
    <recommendedName>
        <fullName>Lanosterol synthase</fullName>
        <ecNumber>5.4.99.7</ecNumber>
    </recommendedName>
    <alternativeName>
        <fullName>2,3-epoxysqualene--lanosterol cyclase</fullName>
    </alternativeName>
    <alternativeName>
        <fullName>Oxidosqualene--lanosterol cyclase</fullName>
        <shortName>OSC</shortName>
    </alternativeName>
</protein>
<name>ERG7_PNECA</name>
<accession>Q96WJ0</accession>
<keyword id="KW-0413">Isomerase</keyword>
<keyword id="KW-0444">Lipid biosynthesis</keyword>
<keyword id="KW-0443">Lipid metabolism</keyword>
<keyword id="KW-0677">Repeat</keyword>
<keyword id="KW-0752">Steroid biosynthesis</keyword>
<evidence type="ECO:0000250" key="1">
    <source>
        <dbReference type="UniProtKB" id="P48449"/>
    </source>
</evidence>
<evidence type="ECO:0000305" key="2"/>
<sequence>MIYGYTEKELEKTDPDGWRLIVEDTGRQRWKYLKTEEERRERPQTYMEKYFLGKNMDLPEQPAAKTPIESARKGFSFYKHLQTSDGNWACEYGGVMFLLPGLIIAMYISKIEFPDEMRIEVIRYLVNHANPEDGGWGIHIEGKSTVFGTALNYVVLRILGLGPDHPVTMKARIRLNELGGAIGCPQWGKFWLAVLNCYGWEGINPILPEFWMLPEWLPIHPSRWWVHTRAVYLPMGYIYGEKFTAPVDPLIESLREELYTQPYSSINFSKHRNTTSPVDVYVPHTRFLRVINSILTFYHTIFRFSWIKDMASKYAYKLIEYENKNTDFLCIGPVNFSIHILAVYWKEGPDSYAFKSHKERMADFLWISKKGMMMNGTNGVQLWDTSFAVQALVESGLAEDPEFKDHMIKALDFLDKCQIQKNCDDQQKCYRHRRKGAWPFSTRQQGYTVSDCTAEALKAVLLLQNLKSFPKRVSYDRLKDSVDVILSLQNKDGGFASYELIRGPSWLEFINPAEVFGDIMIEHSYPECTTAAVTALCYFRSLCSHYRGPEINKSVKNAIQFIKESQRPDGSWYESWAICFTYATMFALESLSCVKDFYENSFHSRRACDFLVNKQEEDGGWSEGYQSCTDGIWTRHPTGSQVVQTAWACIGLMYANYPDETPIKRGINLIMSRQQPNGEWKQEAIEGVFNKNCMISYPNYKFNFTIKALGMYSKRYGNI</sequence>
<dbReference type="EC" id="5.4.99.7"/>
<dbReference type="EMBL" id="AF285825">
    <property type="protein sequence ID" value="AAK82993.1"/>
    <property type="molecule type" value="mRNA"/>
</dbReference>
<dbReference type="SMR" id="Q96WJ0"/>
<dbReference type="BindingDB" id="Q96WJ0"/>
<dbReference type="ChEMBL" id="CHEMBL1075204"/>
<dbReference type="VEuPathDB" id="FungiDB:T552_00939"/>
<dbReference type="UniPathway" id="UPA00767">
    <property type="reaction ID" value="UER00753"/>
</dbReference>
<dbReference type="GO" id="GO:0005811">
    <property type="term" value="C:lipid droplet"/>
    <property type="evidence" value="ECO:0007669"/>
    <property type="project" value="InterPro"/>
</dbReference>
<dbReference type="GO" id="GO:0000250">
    <property type="term" value="F:lanosterol synthase activity"/>
    <property type="evidence" value="ECO:0007669"/>
    <property type="project" value="UniProtKB-EC"/>
</dbReference>
<dbReference type="GO" id="GO:0006696">
    <property type="term" value="P:ergosterol biosynthetic process"/>
    <property type="evidence" value="ECO:0007669"/>
    <property type="project" value="TreeGrafter"/>
</dbReference>
<dbReference type="GO" id="GO:0016104">
    <property type="term" value="P:triterpenoid biosynthetic process"/>
    <property type="evidence" value="ECO:0007669"/>
    <property type="project" value="InterPro"/>
</dbReference>
<dbReference type="CDD" id="cd02892">
    <property type="entry name" value="SQCY_1"/>
    <property type="match status" value="1"/>
</dbReference>
<dbReference type="FunFam" id="1.50.10.20:FF:000003">
    <property type="entry name" value="Terpene cyclase/mutase family member"/>
    <property type="match status" value="1"/>
</dbReference>
<dbReference type="Gene3D" id="1.50.10.20">
    <property type="match status" value="2"/>
</dbReference>
<dbReference type="Gene3D" id="6.20.120.20">
    <property type="match status" value="1"/>
</dbReference>
<dbReference type="InterPro" id="IPR032696">
    <property type="entry name" value="SQ_cyclase_C"/>
</dbReference>
<dbReference type="InterPro" id="IPR032697">
    <property type="entry name" value="SQ_cyclase_N"/>
</dbReference>
<dbReference type="InterPro" id="IPR018333">
    <property type="entry name" value="Squalene_cyclase"/>
</dbReference>
<dbReference type="InterPro" id="IPR002365">
    <property type="entry name" value="Terpene_synthase_CS"/>
</dbReference>
<dbReference type="InterPro" id="IPR008930">
    <property type="entry name" value="Terpenoid_cyclase/PrenylTrfase"/>
</dbReference>
<dbReference type="NCBIfam" id="TIGR01787">
    <property type="entry name" value="squalene_cyclas"/>
    <property type="match status" value="1"/>
</dbReference>
<dbReference type="PANTHER" id="PTHR11764:SF20">
    <property type="entry name" value="LANOSTEROL SYNTHASE"/>
    <property type="match status" value="1"/>
</dbReference>
<dbReference type="PANTHER" id="PTHR11764">
    <property type="entry name" value="TERPENE CYCLASE/MUTASE FAMILY MEMBER"/>
    <property type="match status" value="1"/>
</dbReference>
<dbReference type="Pfam" id="PF13243">
    <property type="entry name" value="SQHop_cyclase_C"/>
    <property type="match status" value="1"/>
</dbReference>
<dbReference type="Pfam" id="PF13249">
    <property type="entry name" value="SQHop_cyclase_N"/>
    <property type="match status" value="1"/>
</dbReference>
<dbReference type="SFLD" id="SFLDG01016">
    <property type="entry name" value="Prenyltransferase_Like_2"/>
    <property type="match status" value="1"/>
</dbReference>
<dbReference type="SUPFAM" id="SSF48239">
    <property type="entry name" value="Terpenoid cyclases/Protein prenyltransferases"/>
    <property type="match status" value="2"/>
</dbReference>
<dbReference type="PROSITE" id="PS01074">
    <property type="entry name" value="TERPENE_SYNTHASES"/>
    <property type="match status" value="1"/>
</dbReference>
<comment type="function">
    <text>Catalyzes the cyclization of (S)-2,3 oxidosqualene to lanosterol, a reaction that forms the sterol nucleus.</text>
</comment>
<comment type="catalytic activity">
    <reaction>
        <text>(S)-2,3-epoxysqualene = lanosterol</text>
        <dbReference type="Rhea" id="RHEA:14621"/>
        <dbReference type="ChEBI" id="CHEBI:15441"/>
        <dbReference type="ChEBI" id="CHEBI:16521"/>
        <dbReference type="EC" id="5.4.99.7"/>
    </reaction>
</comment>
<comment type="pathway">
    <text>Terpene metabolism; lanosterol biosynthesis; lanosterol from farnesyl diphosphate: step 3/3.</text>
</comment>
<comment type="similarity">
    <text evidence="2">Belongs to the terpene cyclase/mutase family.</text>
</comment>
<organism>
    <name type="scientific">Pneumocystis carinii</name>
    <dbReference type="NCBI Taxonomy" id="4754"/>
    <lineage>
        <taxon>Eukaryota</taxon>
        <taxon>Fungi</taxon>
        <taxon>Dikarya</taxon>
        <taxon>Ascomycota</taxon>
        <taxon>Taphrinomycotina</taxon>
        <taxon>Pneumocystomycetes</taxon>
        <taxon>Pneumocystaceae</taxon>
        <taxon>Pneumocystis</taxon>
    </lineage>
</organism>
<reference key="1">
    <citation type="journal article" date="2002" name="Lipids">
        <title>Subcellular localization of oxidosqualene cyclases from Arabidopsis thaliana, Trypanosoma cruzi, and Pneumocystis carinii expressed in yeast.</title>
        <authorList>
            <person name="Joubert B.M."/>
            <person name="LeClair R.J."/>
            <person name="Matsuda S.P.T."/>
            <person name="Balliano G."/>
        </authorList>
    </citation>
    <scope>NUCLEOTIDE SEQUENCE [MRNA]</scope>
</reference>
<gene>
    <name type="primary">ERG7</name>
</gene>